<sequence length="666" mass="72299">MGGLRVDLSGAEIRVDPACGAAADDGGSPPVFLPRQPAAPPLLALDIGGTLIKLVYTASCGGGGAELRFAKFERRRMQECFDFVRAQGLVHRNGSTMGSSKENIALKASGGGAYKYTEDFREKLGVCLDKVDEMDSVVSGANFLLQSVPGAAFTHMNGKKSSVDISPNNLFPYLLVNIGSGVSILKVTGNRKFERVTGTHIGGGTMFGLAKLLTGCKSYDEFLQLSQKGDNFVLDLIVKDICGELVCQKQGLSTSTLASSFGKVITSKKKLTDYRPEDLASTLLSAFTYNIAQISFLVASILHLRRVFFGGSYIRGHKSTMQNISYAIDFWSQSKMQAVFLQHEGYLGALGALMSYGDSGDKNMNLEEMKEEENIHESATPIDETSTDEHNDGNIFPYLLVNIGSGVSMIEVTGNGKFERIIGSHLGGGTILGLARLLTGCSSYDEFLELSQRGNNLAVDLTVGDIYGEHGYPKIGLPASTTAASFGKVSSSRLSEYKVEDLAAALLNSFTYNIGQIAYFVANLSGLKRIFFRGAYICGHEKTMDKISHSLKYWSKGQVQTTFLCHEGFLGTLGAFWSYENMGIDGLAAHEVIREVLLGAPYTGQLPSLPLTHQQDNGEDTTIEGEVERLRHDNAVLKAELERLQRENTELKAKLVKSGKPNTFYH</sequence>
<comment type="function">
    <text evidence="1">Catalyzes the phosphorylation of pantothenate the first step in CoA biosynthesis. May play a role in the physiological regulation of the intracellular CoA concentration (By similarity).</text>
</comment>
<comment type="catalytic activity">
    <reaction>
        <text>(R)-pantothenate + ATP = (R)-4'-phosphopantothenate + ADP + H(+)</text>
        <dbReference type="Rhea" id="RHEA:16373"/>
        <dbReference type="ChEBI" id="CHEBI:10986"/>
        <dbReference type="ChEBI" id="CHEBI:15378"/>
        <dbReference type="ChEBI" id="CHEBI:29032"/>
        <dbReference type="ChEBI" id="CHEBI:30616"/>
        <dbReference type="ChEBI" id="CHEBI:456216"/>
        <dbReference type="EC" id="2.7.1.33"/>
    </reaction>
</comment>
<comment type="activity regulation">
    <text evidence="1">Regulated by feedback inhibition by malonyl-CoA.</text>
</comment>
<comment type="pathway">
    <text>Cofactor biosynthesis; coenzyme A biosynthesis; CoA from (R)-pantothenate: step 1/5.</text>
</comment>
<comment type="similarity">
    <text evidence="2">Belongs to the type II pantothenate kinase family.</text>
</comment>
<gene>
    <name type="ordered locus">Os06g0207000</name>
    <name type="ordered locus">LOC_Os06g09910</name>
    <name type="ORF">P0529B09.16</name>
</gene>
<organism>
    <name type="scientific">Oryza sativa subsp. japonica</name>
    <name type="common">Rice</name>
    <dbReference type="NCBI Taxonomy" id="39947"/>
    <lineage>
        <taxon>Eukaryota</taxon>
        <taxon>Viridiplantae</taxon>
        <taxon>Streptophyta</taxon>
        <taxon>Embryophyta</taxon>
        <taxon>Tracheophyta</taxon>
        <taxon>Spermatophyta</taxon>
        <taxon>Magnoliopsida</taxon>
        <taxon>Liliopsida</taxon>
        <taxon>Poales</taxon>
        <taxon>Poaceae</taxon>
        <taxon>BOP clade</taxon>
        <taxon>Oryzoideae</taxon>
        <taxon>Oryzeae</taxon>
        <taxon>Oryzinae</taxon>
        <taxon>Oryza</taxon>
        <taxon>Oryza sativa</taxon>
    </lineage>
</organism>
<protein>
    <recommendedName>
        <fullName>Pantothenate kinase 1</fullName>
        <ecNumber>2.7.1.33</ecNumber>
    </recommendedName>
    <alternativeName>
        <fullName>Pantothenic acid kinase 1</fullName>
    </alternativeName>
</protein>
<reference key="1">
    <citation type="journal article" date="2005" name="Nature">
        <title>The map-based sequence of the rice genome.</title>
        <authorList>
            <consortium name="International rice genome sequencing project (IRGSP)"/>
        </authorList>
    </citation>
    <scope>NUCLEOTIDE SEQUENCE [LARGE SCALE GENOMIC DNA]</scope>
    <source>
        <strain>cv. Nipponbare</strain>
    </source>
</reference>
<reference key="2">
    <citation type="journal article" date="2008" name="Nucleic Acids Res.">
        <title>The rice annotation project database (RAP-DB): 2008 update.</title>
        <authorList>
            <consortium name="The rice annotation project (RAP)"/>
        </authorList>
    </citation>
    <scope>GENOME REANNOTATION</scope>
    <source>
        <strain>cv. Nipponbare</strain>
    </source>
</reference>
<reference key="3">
    <citation type="journal article" date="2013" name="Rice">
        <title>Improvement of the Oryza sativa Nipponbare reference genome using next generation sequence and optical map data.</title>
        <authorList>
            <person name="Kawahara Y."/>
            <person name="de la Bastide M."/>
            <person name="Hamilton J.P."/>
            <person name="Kanamori H."/>
            <person name="McCombie W.R."/>
            <person name="Ouyang S."/>
            <person name="Schwartz D.C."/>
            <person name="Tanaka T."/>
            <person name="Wu J."/>
            <person name="Zhou S."/>
            <person name="Childs K.L."/>
            <person name="Davidson R.M."/>
            <person name="Lin H."/>
            <person name="Quesada-Ocampo L."/>
            <person name="Vaillancourt B."/>
            <person name="Sakai H."/>
            <person name="Lee S.S."/>
            <person name="Kim J."/>
            <person name="Numa H."/>
            <person name="Itoh T."/>
            <person name="Buell C.R."/>
            <person name="Matsumoto T."/>
        </authorList>
    </citation>
    <scope>GENOME REANNOTATION</scope>
    <source>
        <strain>cv. Nipponbare</strain>
    </source>
</reference>
<reference key="4">
    <citation type="journal article" date="2003" name="Science">
        <title>Collection, mapping, and annotation of over 28,000 cDNA clones from japonica rice.</title>
        <authorList>
            <consortium name="The rice full-length cDNA consortium"/>
        </authorList>
    </citation>
    <scope>NUCLEOTIDE SEQUENCE [LARGE SCALE MRNA]</scope>
    <source>
        <strain>cv. Nipponbare</strain>
    </source>
</reference>
<name>PANK1_ORYSJ</name>
<evidence type="ECO:0000250" key="1"/>
<evidence type="ECO:0000305" key="2"/>
<keyword id="KW-0067">ATP-binding</keyword>
<keyword id="KW-0173">Coenzyme A biosynthesis</keyword>
<keyword id="KW-0418">Kinase</keyword>
<keyword id="KW-0547">Nucleotide-binding</keyword>
<keyword id="KW-1185">Reference proteome</keyword>
<keyword id="KW-0808">Transferase</keyword>
<feature type="chain" id="PRO_0000429406" description="Pantothenate kinase 1">
    <location>
        <begin position="1"/>
        <end position="666"/>
    </location>
</feature>
<proteinExistence type="evidence at transcript level"/>
<dbReference type="EC" id="2.7.1.33"/>
<dbReference type="EMBL" id="AP004754">
    <property type="protein sequence ID" value="BAD35853.1"/>
    <property type="molecule type" value="Genomic_DNA"/>
</dbReference>
<dbReference type="EMBL" id="AP008212">
    <property type="protein sequence ID" value="BAF19012.1"/>
    <property type="molecule type" value="Genomic_DNA"/>
</dbReference>
<dbReference type="EMBL" id="AP014962">
    <property type="protein sequence ID" value="BAS96706.1"/>
    <property type="molecule type" value="Genomic_DNA"/>
</dbReference>
<dbReference type="EMBL" id="AK067115">
    <property type="protein sequence ID" value="BAG90276.1"/>
    <property type="molecule type" value="mRNA"/>
</dbReference>
<dbReference type="RefSeq" id="XP_015644088.1">
    <property type="nucleotide sequence ID" value="XM_015788602.1"/>
</dbReference>
<dbReference type="SMR" id="Q69TF4"/>
<dbReference type="FunCoup" id="Q69TF4">
    <property type="interactions" value="198"/>
</dbReference>
<dbReference type="STRING" id="39947.Q69TF4"/>
<dbReference type="PaxDb" id="39947-Q69TF4"/>
<dbReference type="EnsemblPlants" id="Os06t0207000-01">
    <property type="protein sequence ID" value="Os06t0207000-01"/>
    <property type="gene ID" value="Os06g0207000"/>
</dbReference>
<dbReference type="Gramene" id="Os06t0207000-01">
    <property type="protein sequence ID" value="Os06t0207000-01"/>
    <property type="gene ID" value="Os06g0207000"/>
</dbReference>
<dbReference type="KEGG" id="dosa:Os06g0207000"/>
<dbReference type="eggNOG" id="KOG2201">
    <property type="taxonomic scope" value="Eukaryota"/>
</dbReference>
<dbReference type="HOGENOM" id="CLU_035665_0_0_1"/>
<dbReference type="InParanoid" id="Q69TF4"/>
<dbReference type="OMA" id="CNGGTRP"/>
<dbReference type="OrthoDB" id="498611at2759"/>
<dbReference type="PlantReactome" id="R-OSA-1119394">
    <property type="pathway name" value="Pantothenate and coenzyme A biosynthesis III"/>
</dbReference>
<dbReference type="UniPathway" id="UPA00241">
    <property type="reaction ID" value="UER00352"/>
</dbReference>
<dbReference type="Proteomes" id="UP000000763">
    <property type="component" value="Chromosome 6"/>
</dbReference>
<dbReference type="Proteomes" id="UP000059680">
    <property type="component" value="Chromosome 6"/>
</dbReference>
<dbReference type="GO" id="GO:0005829">
    <property type="term" value="C:cytosol"/>
    <property type="evidence" value="ECO:0000318"/>
    <property type="project" value="GO_Central"/>
</dbReference>
<dbReference type="GO" id="GO:0005634">
    <property type="term" value="C:nucleus"/>
    <property type="evidence" value="ECO:0000318"/>
    <property type="project" value="GO_Central"/>
</dbReference>
<dbReference type="GO" id="GO:0005524">
    <property type="term" value="F:ATP binding"/>
    <property type="evidence" value="ECO:0007669"/>
    <property type="project" value="UniProtKB-KW"/>
</dbReference>
<dbReference type="GO" id="GO:0004594">
    <property type="term" value="F:pantothenate kinase activity"/>
    <property type="evidence" value="ECO:0000318"/>
    <property type="project" value="GO_Central"/>
</dbReference>
<dbReference type="GO" id="GO:0015937">
    <property type="term" value="P:coenzyme A biosynthetic process"/>
    <property type="evidence" value="ECO:0000318"/>
    <property type="project" value="GO_Central"/>
</dbReference>
<dbReference type="CDD" id="cd24086">
    <property type="entry name" value="ASKHA_NBD_PanK-II_euk"/>
    <property type="match status" value="1"/>
</dbReference>
<dbReference type="Gene3D" id="3.30.420.40">
    <property type="match status" value="3"/>
</dbReference>
<dbReference type="Gene3D" id="6.10.10.60">
    <property type="match status" value="2"/>
</dbReference>
<dbReference type="InterPro" id="IPR043129">
    <property type="entry name" value="ATPase_NBD"/>
</dbReference>
<dbReference type="InterPro" id="IPR004567">
    <property type="entry name" value="Type_II_PanK"/>
</dbReference>
<dbReference type="NCBIfam" id="TIGR00555">
    <property type="entry name" value="panK_eukar"/>
    <property type="match status" value="1"/>
</dbReference>
<dbReference type="PANTHER" id="PTHR12280">
    <property type="entry name" value="PANTOTHENATE KINASE"/>
    <property type="match status" value="1"/>
</dbReference>
<dbReference type="PANTHER" id="PTHR12280:SF36">
    <property type="entry name" value="PANTOTHENATE KINASE 1"/>
    <property type="match status" value="1"/>
</dbReference>
<dbReference type="Pfam" id="PF03630">
    <property type="entry name" value="Fumble"/>
    <property type="match status" value="2"/>
</dbReference>
<dbReference type="SUPFAM" id="SSF53067">
    <property type="entry name" value="Actin-like ATPase domain"/>
    <property type="match status" value="3"/>
</dbReference>
<accession>Q69TF4</accession>
<accession>A0A0P0WUF1</accession>